<protein>
    <recommendedName>
        <fullName evidence="1">Glycogen synthase</fullName>
        <ecNumber evidence="1">2.4.1.21</ecNumber>
    </recommendedName>
    <alternativeName>
        <fullName evidence="1">Starch [bacterial glycogen] synthase</fullName>
    </alternativeName>
</protein>
<keyword id="KW-0320">Glycogen biosynthesis</keyword>
<keyword id="KW-0328">Glycosyltransferase</keyword>
<keyword id="KW-1185">Reference proteome</keyword>
<keyword id="KW-0808">Transferase</keyword>
<feature type="chain" id="PRO_1000126086" description="Glycogen synthase">
    <location>
        <begin position="1"/>
        <end position="496"/>
    </location>
</feature>
<feature type="binding site" evidence="1">
    <location>
        <position position="15"/>
    </location>
    <ligand>
        <name>ADP-alpha-D-glucose</name>
        <dbReference type="ChEBI" id="CHEBI:57498"/>
    </ligand>
</feature>
<reference key="1">
    <citation type="submission" date="2008-04" db="EMBL/GenBank/DDBJ databases">
        <title>Complete sequence of chromosome of Natranaerobius thermophilus JW/NM-WN-LF.</title>
        <authorList>
            <consortium name="US DOE Joint Genome Institute"/>
            <person name="Copeland A."/>
            <person name="Lucas S."/>
            <person name="Lapidus A."/>
            <person name="Glavina del Rio T."/>
            <person name="Dalin E."/>
            <person name="Tice H."/>
            <person name="Bruce D."/>
            <person name="Goodwin L."/>
            <person name="Pitluck S."/>
            <person name="Chertkov O."/>
            <person name="Brettin T."/>
            <person name="Detter J.C."/>
            <person name="Han C."/>
            <person name="Kuske C.R."/>
            <person name="Schmutz J."/>
            <person name="Larimer F."/>
            <person name="Land M."/>
            <person name="Hauser L."/>
            <person name="Kyrpides N."/>
            <person name="Lykidis A."/>
            <person name="Mesbah N.M."/>
            <person name="Wiegel J."/>
        </authorList>
    </citation>
    <scope>NUCLEOTIDE SEQUENCE [LARGE SCALE GENOMIC DNA]</scope>
    <source>
        <strain>ATCC BAA-1301 / DSM 18059 / JW/NM-WN-LF</strain>
    </source>
</reference>
<sequence length="496" mass="57308">MKVLVATAEASPFAKRGGLGDVLGALPIAIKKQSEIDIRVVLPGYSAIPSQFKSEFQPIDSIIIPLGWRAQKSRVSSYNFRNVTFYFIENDYYFNREDIYGYFDEAEQFGFFSKAILDIMPLLDFYPDIIHLNDWHTAMVSPLLKYKYAHKTNYNQMKTILTIHNLKYQGIFTPHVLEDFFDLHDHKLQHDPEYLEYHGQISFLKGGLIFSDAITTVSPTYAKEIQSPELGMGVDGLLHKRRDDLYGILNGIDYQDYNPKTDVNIYRNYNLPDEGKTNEKLINKLRLQEDLRLPVSSRVPLIAFINRLVKQKGLDLITYVLPELLESEEVQFVFLGTGDPHYEQYLSYLAEKHQNLSAQIKFDEGLARKIYAASDLFLMPSLFEPCGIGQQIAIRYGSVPIVRKVGGLHDTVYPSISEEGTRGIGFTFESFNAHEMLFTIKEAIQYYHQKAFWQEIINNLTTIDFSWEKSACEYIELYHKLIHRNTNSTRKESYLK</sequence>
<comment type="function">
    <text evidence="1">Synthesizes alpha-1,4-glucan chains using ADP-glucose.</text>
</comment>
<comment type="catalytic activity">
    <reaction evidence="1">
        <text>[(1-&gt;4)-alpha-D-glucosyl](n) + ADP-alpha-D-glucose = [(1-&gt;4)-alpha-D-glucosyl](n+1) + ADP + H(+)</text>
        <dbReference type="Rhea" id="RHEA:18189"/>
        <dbReference type="Rhea" id="RHEA-COMP:9584"/>
        <dbReference type="Rhea" id="RHEA-COMP:9587"/>
        <dbReference type="ChEBI" id="CHEBI:15378"/>
        <dbReference type="ChEBI" id="CHEBI:15444"/>
        <dbReference type="ChEBI" id="CHEBI:57498"/>
        <dbReference type="ChEBI" id="CHEBI:456216"/>
        <dbReference type="EC" id="2.4.1.21"/>
    </reaction>
</comment>
<comment type="pathway">
    <text evidence="1">Glycan biosynthesis; glycogen biosynthesis.</text>
</comment>
<comment type="similarity">
    <text evidence="1">Belongs to the glycosyltransferase 1 family. Bacterial/plant glycogen synthase subfamily.</text>
</comment>
<proteinExistence type="inferred from homology"/>
<accession>B2A6E4</accession>
<gene>
    <name evidence="1" type="primary">glgA</name>
    <name type="ordered locus">Nther_0559</name>
</gene>
<name>GLGA_NATTJ</name>
<evidence type="ECO:0000255" key="1">
    <source>
        <dbReference type="HAMAP-Rule" id="MF_00484"/>
    </source>
</evidence>
<organism>
    <name type="scientific">Natranaerobius thermophilus (strain ATCC BAA-1301 / DSM 18059 / JW/NM-WN-LF)</name>
    <dbReference type="NCBI Taxonomy" id="457570"/>
    <lineage>
        <taxon>Bacteria</taxon>
        <taxon>Bacillati</taxon>
        <taxon>Bacillota</taxon>
        <taxon>Clostridia</taxon>
        <taxon>Natranaerobiales</taxon>
        <taxon>Natranaerobiaceae</taxon>
        <taxon>Natranaerobius</taxon>
    </lineage>
</organism>
<dbReference type="EC" id="2.4.1.21" evidence="1"/>
<dbReference type="EMBL" id="CP001034">
    <property type="protein sequence ID" value="ACB84155.1"/>
    <property type="molecule type" value="Genomic_DNA"/>
</dbReference>
<dbReference type="RefSeq" id="WP_012447041.1">
    <property type="nucleotide sequence ID" value="NC_010718.1"/>
</dbReference>
<dbReference type="SMR" id="B2A6E4"/>
<dbReference type="FunCoup" id="B2A6E4">
    <property type="interactions" value="75"/>
</dbReference>
<dbReference type="STRING" id="457570.Nther_0559"/>
<dbReference type="CAZy" id="GT5">
    <property type="family name" value="Glycosyltransferase Family 5"/>
</dbReference>
<dbReference type="KEGG" id="nth:Nther_0559"/>
<dbReference type="eggNOG" id="COG0297">
    <property type="taxonomic scope" value="Bacteria"/>
</dbReference>
<dbReference type="HOGENOM" id="CLU_009583_18_2_9"/>
<dbReference type="InParanoid" id="B2A6E4"/>
<dbReference type="OrthoDB" id="9808590at2"/>
<dbReference type="UniPathway" id="UPA00164"/>
<dbReference type="Proteomes" id="UP000001683">
    <property type="component" value="Chromosome"/>
</dbReference>
<dbReference type="GO" id="GO:0009011">
    <property type="term" value="F:alpha-1,4-glucan glucosyltransferase (ADP-glucose donor) activity"/>
    <property type="evidence" value="ECO:0007669"/>
    <property type="project" value="UniProtKB-UniRule"/>
</dbReference>
<dbReference type="GO" id="GO:0004373">
    <property type="term" value="F:alpha-1,4-glucan glucosyltransferase (UDP-glucose donor) activity"/>
    <property type="evidence" value="ECO:0007669"/>
    <property type="project" value="InterPro"/>
</dbReference>
<dbReference type="GO" id="GO:0005978">
    <property type="term" value="P:glycogen biosynthetic process"/>
    <property type="evidence" value="ECO:0007669"/>
    <property type="project" value="UniProtKB-UniRule"/>
</dbReference>
<dbReference type="CDD" id="cd03791">
    <property type="entry name" value="GT5_Glycogen_synthase_DULL1-like"/>
    <property type="match status" value="1"/>
</dbReference>
<dbReference type="Gene3D" id="3.40.50.2000">
    <property type="entry name" value="Glycogen Phosphorylase B"/>
    <property type="match status" value="2"/>
</dbReference>
<dbReference type="HAMAP" id="MF_00484">
    <property type="entry name" value="Glycogen_synth"/>
    <property type="match status" value="1"/>
</dbReference>
<dbReference type="InterPro" id="IPR001296">
    <property type="entry name" value="Glyco_trans_1"/>
</dbReference>
<dbReference type="InterPro" id="IPR011835">
    <property type="entry name" value="GS/SS"/>
</dbReference>
<dbReference type="InterPro" id="IPR013534">
    <property type="entry name" value="Starch_synth_cat_dom"/>
</dbReference>
<dbReference type="NCBIfam" id="TIGR02095">
    <property type="entry name" value="glgA"/>
    <property type="match status" value="1"/>
</dbReference>
<dbReference type="NCBIfam" id="NF001898">
    <property type="entry name" value="PRK00654.1-1"/>
    <property type="match status" value="1"/>
</dbReference>
<dbReference type="PANTHER" id="PTHR45825:SF11">
    <property type="entry name" value="ALPHA AMYLASE DOMAIN-CONTAINING PROTEIN"/>
    <property type="match status" value="1"/>
</dbReference>
<dbReference type="PANTHER" id="PTHR45825">
    <property type="entry name" value="GRANULE-BOUND STARCH SYNTHASE 1, CHLOROPLASTIC/AMYLOPLASTIC"/>
    <property type="match status" value="1"/>
</dbReference>
<dbReference type="Pfam" id="PF08323">
    <property type="entry name" value="Glyco_transf_5"/>
    <property type="match status" value="1"/>
</dbReference>
<dbReference type="Pfam" id="PF00534">
    <property type="entry name" value="Glycos_transf_1"/>
    <property type="match status" value="1"/>
</dbReference>
<dbReference type="SUPFAM" id="SSF53756">
    <property type="entry name" value="UDP-Glycosyltransferase/glycogen phosphorylase"/>
    <property type="match status" value="1"/>
</dbReference>